<reference key="1">
    <citation type="journal article" date="2000" name="Science">
        <title>The genome sequence of Drosophila melanogaster.</title>
        <authorList>
            <person name="Adams M.D."/>
            <person name="Celniker S.E."/>
            <person name="Holt R.A."/>
            <person name="Evans C.A."/>
            <person name="Gocayne J.D."/>
            <person name="Amanatides P.G."/>
            <person name="Scherer S.E."/>
            <person name="Li P.W."/>
            <person name="Hoskins R.A."/>
            <person name="Galle R.F."/>
            <person name="George R.A."/>
            <person name="Lewis S.E."/>
            <person name="Richards S."/>
            <person name="Ashburner M."/>
            <person name="Henderson S.N."/>
            <person name="Sutton G.G."/>
            <person name="Wortman J.R."/>
            <person name="Yandell M.D."/>
            <person name="Zhang Q."/>
            <person name="Chen L.X."/>
            <person name="Brandon R.C."/>
            <person name="Rogers Y.-H.C."/>
            <person name="Blazej R.G."/>
            <person name="Champe M."/>
            <person name="Pfeiffer B.D."/>
            <person name="Wan K.H."/>
            <person name="Doyle C."/>
            <person name="Baxter E.G."/>
            <person name="Helt G."/>
            <person name="Nelson C.R."/>
            <person name="Miklos G.L.G."/>
            <person name="Abril J.F."/>
            <person name="Agbayani A."/>
            <person name="An H.-J."/>
            <person name="Andrews-Pfannkoch C."/>
            <person name="Baldwin D."/>
            <person name="Ballew R.M."/>
            <person name="Basu A."/>
            <person name="Baxendale J."/>
            <person name="Bayraktaroglu L."/>
            <person name="Beasley E.M."/>
            <person name="Beeson K.Y."/>
            <person name="Benos P.V."/>
            <person name="Berman B.P."/>
            <person name="Bhandari D."/>
            <person name="Bolshakov S."/>
            <person name="Borkova D."/>
            <person name="Botchan M.R."/>
            <person name="Bouck J."/>
            <person name="Brokstein P."/>
            <person name="Brottier P."/>
            <person name="Burtis K.C."/>
            <person name="Busam D.A."/>
            <person name="Butler H."/>
            <person name="Cadieu E."/>
            <person name="Center A."/>
            <person name="Chandra I."/>
            <person name="Cherry J.M."/>
            <person name="Cawley S."/>
            <person name="Dahlke C."/>
            <person name="Davenport L.B."/>
            <person name="Davies P."/>
            <person name="de Pablos B."/>
            <person name="Delcher A."/>
            <person name="Deng Z."/>
            <person name="Mays A.D."/>
            <person name="Dew I."/>
            <person name="Dietz S.M."/>
            <person name="Dodson K."/>
            <person name="Doup L.E."/>
            <person name="Downes M."/>
            <person name="Dugan-Rocha S."/>
            <person name="Dunkov B.C."/>
            <person name="Dunn P."/>
            <person name="Durbin K.J."/>
            <person name="Evangelista C.C."/>
            <person name="Ferraz C."/>
            <person name="Ferriera S."/>
            <person name="Fleischmann W."/>
            <person name="Fosler C."/>
            <person name="Gabrielian A.E."/>
            <person name="Garg N.S."/>
            <person name="Gelbart W.M."/>
            <person name="Glasser K."/>
            <person name="Glodek A."/>
            <person name="Gong F."/>
            <person name="Gorrell J.H."/>
            <person name="Gu Z."/>
            <person name="Guan P."/>
            <person name="Harris M."/>
            <person name="Harris N.L."/>
            <person name="Harvey D.A."/>
            <person name="Heiman T.J."/>
            <person name="Hernandez J.R."/>
            <person name="Houck J."/>
            <person name="Hostin D."/>
            <person name="Houston K.A."/>
            <person name="Howland T.J."/>
            <person name="Wei M.-H."/>
            <person name="Ibegwam C."/>
            <person name="Jalali M."/>
            <person name="Kalush F."/>
            <person name="Karpen G.H."/>
            <person name="Ke Z."/>
            <person name="Kennison J.A."/>
            <person name="Ketchum K.A."/>
            <person name="Kimmel B.E."/>
            <person name="Kodira C.D."/>
            <person name="Kraft C.L."/>
            <person name="Kravitz S."/>
            <person name="Kulp D."/>
            <person name="Lai Z."/>
            <person name="Lasko P."/>
            <person name="Lei Y."/>
            <person name="Levitsky A.A."/>
            <person name="Li J.H."/>
            <person name="Li Z."/>
            <person name="Liang Y."/>
            <person name="Lin X."/>
            <person name="Liu X."/>
            <person name="Mattei B."/>
            <person name="McIntosh T.C."/>
            <person name="McLeod M.P."/>
            <person name="McPherson D."/>
            <person name="Merkulov G."/>
            <person name="Milshina N.V."/>
            <person name="Mobarry C."/>
            <person name="Morris J."/>
            <person name="Moshrefi A."/>
            <person name="Mount S.M."/>
            <person name="Moy M."/>
            <person name="Murphy B."/>
            <person name="Murphy L."/>
            <person name="Muzny D.M."/>
            <person name="Nelson D.L."/>
            <person name="Nelson D.R."/>
            <person name="Nelson K.A."/>
            <person name="Nixon K."/>
            <person name="Nusskern D.R."/>
            <person name="Pacleb J.M."/>
            <person name="Palazzolo M."/>
            <person name="Pittman G.S."/>
            <person name="Pan S."/>
            <person name="Pollard J."/>
            <person name="Puri V."/>
            <person name="Reese M.G."/>
            <person name="Reinert K."/>
            <person name="Remington K."/>
            <person name="Saunders R.D.C."/>
            <person name="Scheeler F."/>
            <person name="Shen H."/>
            <person name="Shue B.C."/>
            <person name="Siden-Kiamos I."/>
            <person name="Simpson M."/>
            <person name="Skupski M.P."/>
            <person name="Smith T.J."/>
            <person name="Spier E."/>
            <person name="Spradling A.C."/>
            <person name="Stapleton M."/>
            <person name="Strong R."/>
            <person name="Sun E."/>
            <person name="Svirskas R."/>
            <person name="Tector C."/>
            <person name="Turner R."/>
            <person name="Venter E."/>
            <person name="Wang A.H."/>
            <person name="Wang X."/>
            <person name="Wang Z.-Y."/>
            <person name="Wassarman D.A."/>
            <person name="Weinstock G.M."/>
            <person name="Weissenbach J."/>
            <person name="Williams S.M."/>
            <person name="Woodage T."/>
            <person name="Worley K.C."/>
            <person name="Wu D."/>
            <person name="Yang S."/>
            <person name="Yao Q.A."/>
            <person name="Ye J."/>
            <person name="Yeh R.-F."/>
            <person name="Zaveri J.S."/>
            <person name="Zhan M."/>
            <person name="Zhang G."/>
            <person name="Zhao Q."/>
            <person name="Zheng L."/>
            <person name="Zheng X.H."/>
            <person name="Zhong F.N."/>
            <person name="Zhong W."/>
            <person name="Zhou X."/>
            <person name="Zhu S.C."/>
            <person name="Zhu X."/>
            <person name="Smith H.O."/>
            <person name="Gibbs R.A."/>
            <person name="Myers E.W."/>
            <person name="Rubin G.M."/>
            <person name="Venter J.C."/>
        </authorList>
    </citation>
    <scope>NUCLEOTIDE SEQUENCE [LARGE SCALE GENOMIC DNA]</scope>
    <source>
        <strain>Berkeley</strain>
    </source>
</reference>
<reference key="2">
    <citation type="journal article" date="2002" name="Genome Biol.">
        <title>Annotation of the Drosophila melanogaster euchromatic genome: a systematic review.</title>
        <authorList>
            <person name="Misra S."/>
            <person name="Crosby M.A."/>
            <person name="Mungall C.J."/>
            <person name="Matthews B.B."/>
            <person name="Campbell K.S."/>
            <person name="Hradecky P."/>
            <person name="Huang Y."/>
            <person name="Kaminker J.S."/>
            <person name="Millburn G.H."/>
            <person name="Prochnik S.E."/>
            <person name="Smith C.D."/>
            <person name="Tupy J.L."/>
            <person name="Whitfield E.J."/>
            <person name="Bayraktaroglu L."/>
            <person name="Berman B.P."/>
            <person name="Bettencourt B.R."/>
            <person name="Celniker S.E."/>
            <person name="de Grey A.D.N.J."/>
            <person name="Drysdale R.A."/>
            <person name="Harris N.L."/>
            <person name="Richter J."/>
            <person name="Russo S."/>
            <person name="Schroeder A.J."/>
            <person name="Shu S.Q."/>
            <person name="Stapleton M."/>
            <person name="Yamada C."/>
            <person name="Ashburner M."/>
            <person name="Gelbart W.M."/>
            <person name="Rubin G.M."/>
            <person name="Lewis S.E."/>
        </authorList>
    </citation>
    <scope>GENOME REANNOTATION</scope>
    <source>
        <strain>Berkeley</strain>
    </source>
</reference>
<reference key="3">
    <citation type="journal article" date="2002" name="Genome Biol.">
        <title>A Drosophila full-length cDNA resource.</title>
        <authorList>
            <person name="Stapleton M."/>
            <person name="Carlson J.W."/>
            <person name="Brokstein P."/>
            <person name="Yu C."/>
            <person name="Champe M."/>
            <person name="George R.A."/>
            <person name="Guarin H."/>
            <person name="Kronmiller B."/>
            <person name="Pacleb J.M."/>
            <person name="Park S."/>
            <person name="Wan K.H."/>
            <person name="Rubin G.M."/>
            <person name="Celniker S.E."/>
        </authorList>
    </citation>
    <scope>NUCLEOTIDE SEQUENCE [LARGE SCALE MRNA]</scope>
    <source>
        <strain>Berkeley</strain>
        <tissue>Embryo</tissue>
    </source>
</reference>
<reference key="4">
    <citation type="journal article" date="2007" name="Mol. Biosyst.">
        <title>An integrated chemical, mass spectrometric and computational strategy for (quantitative) phosphoproteomics: application to Drosophila melanogaster Kc167 cells.</title>
        <authorList>
            <person name="Bodenmiller B."/>
            <person name="Mueller L.N."/>
            <person name="Pedrioli P.G.A."/>
            <person name="Pflieger D."/>
            <person name="Juenger M.A."/>
            <person name="Eng J.K."/>
            <person name="Aebersold R."/>
            <person name="Tao W.A."/>
        </authorList>
    </citation>
    <scope>PHOSPHORYLATION [LARGE SCALE ANALYSIS] AT SER-198</scope>
    <scope>IDENTIFICATION BY MASS SPECTROMETRY</scope>
</reference>
<reference key="5">
    <citation type="journal article" date="2008" name="J. Proteome Res.">
        <title>Phosphoproteome analysis of Drosophila melanogaster embryos.</title>
        <authorList>
            <person name="Zhai B."/>
            <person name="Villen J."/>
            <person name="Beausoleil S.A."/>
            <person name="Mintseris J."/>
            <person name="Gygi S.P."/>
        </authorList>
    </citation>
    <scope>PHOSPHORYLATION [LARGE SCALE ANALYSIS] AT SER-198</scope>
    <scope>IDENTIFICATION BY MASS SPECTROMETRY</scope>
    <source>
        <tissue>Embryo</tissue>
    </source>
</reference>
<sequence length="269" mass="29946">MPGVETIKSSWADEVELDYGGLPPTTETVENGQKYVTEYKYNKDDKKTKVVRTYKISKQVVPKTVAKRRTWTKFGDSKNDKPGPNSQTTMVSEEIIMQFLNSKEDEKANDPLLDPTKNIAKCRICNGEHWSVNCPYKGTAMDTNMMEKKASAAAAAAVDAPKSGKYVPPFLKDSQKGALGMRGRDDTAAIRISNLSESMTEADLEELVKKIGPQSKMYLARDKNTGLCKGFAYVHFKQRKDAAAAIEILNGHGYDHLILSVEWSKPQNN</sequence>
<proteinExistence type="evidence at protein level"/>
<accession>Q9W4X7</accession>
<keyword id="KW-0963">Cytoplasm</keyword>
<keyword id="KW-0396">Initiation factor</keyword>
<keyword id="KW-0597">Phosphoprotein</keyword>
<keyword id="KW-0648">Protein biosynthesis</keyword>
<keyword id="KW-1185">Reference proteome</keyword>
<keyword id="KW-0694">RNA-binding</keyword>
<dbReference type="EMBL" id="AE014298">
    <property type="protein sequence ID" value="AAF45796.1"/>
    <property type="molecule type" value="Genomic_DNA"/>
</dbReference>
<dbReference type="EMBL" id="AY118933">
    <property type="protein sequence ID" value="AAM50793.1"/>
    <property type="molecule type" value="mRNA"/>
</dbReference>
<dbReference type="RefSeq" id="NP_570011.1">
    <property type="nucleotide sequence ID" value="NM_130655.2"/>
</dbReference>
<dbReference type="SMR" id="Q9W4X7"/>
<dbReference type="BioGRID" id="57774">
    <property type="interactions" value="15"/>
</dbReference>
<dbReference type="FunCoup" id="Q9W4X7">
    <property type="interactions" value="1725"/>
</dbReference>
<dbReference type="IntAct" id="Q9W4X7">
    <property type="interactions" value="3"/>
</dbReference>
<dbReference type="STRING" id="7227.FBpp0070430"/>
<dbReference type="iPTMnet" id="Q9W4X7"/>
<dbReference type="PaxDb" id="7227-FBpp0070430"/>
<dbReference type="DNASU" id="31243"/>
<dbReference type="EnsemblMetazoa" id="FBtr0070446">
    <property type="protein sequence ID" value="FBpp0070430"/>
    <property type="gene ID" value="FBgn0029629"/>
</dbReference>
<dbReference type="GeneID" id="31243"/>
<dbReference type="KEGG" id="dme:Dmel_CG8636"/>
<dbReference type="UCSC" id="CG8636-RA">
    <property type="organism name" value="d. melanogaster"/>
</dbReference>
<dbReference type="AGR" id="FB:FBgn0029629"/>
<dbReference type="CTD" id="31243"/>
<dbReference type="FlyBase" id="FBgn0029629">
    <property type="gene designation" value="eIF3g1"/>
</dbReference>
<dbReference type="VEuPathDB" id="VectorBase:FBgn0029629"/>
<dbReference type="eggNOG" id="KOG0122">
    <property type="taxonomic scope" value="Eukaryota"/>
</dbReference>
<dbReference type="GeneTree" id="ENSGT00510000047802"/>
<dbReference type="HOGENOM" id="CLU_034595_0_0_1"/>
<dbReference type="InParanoid" id="Q9W4X7"/>
<dbReference type="OMA" id="ICQGDHF"/>
<dbReference type="OrthoDB" id="639027at2759"/>
<dbReference type="PhylomeDB" id="Q9W4X7"/>
<dbReference type="Reactome" id="R-DME-156827">
    <property type="pathway name" value="L13a-mediated translational silencing of Ceruloplasmin expression"/>
</dbReference>
<dbReference type="Reactome" id="R-DME-72649">
    <property type="pathway name" value="Translation initiation complex formation"/>
</dbReference>
<dbReference type="Reactome" id="R-DME-72689">
    <property type="pathway name" value="Formation of a pool of free 40S subunits"/>
</dbReference>
<dbReference type="Reactome" id="R-DME-72695">
    <property type="pathway name" value="Formation of the ternary complex, and subsequently, the 43S complex"/>
</dbReference>
<dbReference type="Reactome" id="R-DME-72702">
    <property type="pathway name" value="Ribosomal scanning and start codon recognition"/>
</dbReference>
<dbReference type="BioGRID-ORCS" id="31243">
    <property type="hits" value="1 hit in 1 CRISPR screen"/>
</dbReference>
<dbReference type="GenomeRNAi" id="31243"/>
<dbReference type="PRO" id="PR:Q9W4X7"/>
<dbReference type="Proteomes" id="UP000000803">
    <property type="component" value="Chromosome X"/>
</dbReference>
<dbReference type="Bgee" id="FBgn0029629">
    <property type="expression patterns" value="Expressed in adult enteroendocrine precursor cell in adult midgut (Drosophila) and 243 other cell types or tissues"/>
</dbReference>
<dbReference type="GO" id="GO:0016282">
    <property type="term" value="C:eukaryotic 43S preinitiation complex"/>
    <property type="evidence" value="ECO:0007669"/>
    <property type="project" value="UniProtKB-UniRule"/>
</dbReference>
<dbReference type="GO" id="GO:0033290">
    <property type="term" value="C:eukaryotic 48S preinitiation complex"/>
    <property type="evidence" value="ECO:0007669"/>
    <property type="project" value="UniProtKB-UniRule"/>
</dbReference>
<dbReference type="GO" id="GO:0005852">
    <property type="term" value="C:eukaryotic translation initiation factor 3 complex"/>
    <property type="evidence" value="ECO:0000250"/>
    <property type="project" value="FlyBase"/>
</dbReference>
<dbReference type="GO" id="GO:0003729">
    <property type="term" value="F:mRNA binding"/>
    <property type="evidence" value="ECO:0000250"/>
    <property type="project" value="FlyBase"/>
</dbReference>
<dbReference type="GO" id="GO:0003743">
    <property type="term" value="F:translation initiation factor activity"/>
    <property type="evidence" value="ECO:0000250"/>
    <property type="project" value="FlyBase"/>
</dbReference>
<dbReference type="GO" id="GO:0001732">
    <property type="term" value="P:formation of cytoplasmic translation initiation complex"/>
    <property type="evidence" value="ECO:0007669"/>
    <property type="project" value="UniProtKB-UniRule"/>
</dbReference>
<dbReference type="GO" id="GO:0000278">
    <property type="term" value="P:mitotic cell cycle"/>
    <property type="evidence" value="ECO:0007001"/>
    <property type="project" value="FlyBase"/>
</dbReference>
<dbReference type="GO" id="GO:0006413">
    <property type="term" value="P:translational initiation"/>
    <property type="evidence" value="ECO:0000250"/>
    <property type="project" value="FlyBase"/>
</dbReference>
<dbReference type="CDD" id="cd12933">
    <property type="entry name" value="eIF3G"/>
    <property type="match status" value="1"/>
</dbReference>
<dbReference type="CDD" id="cd12408">
    <property type="entry name" value="RRM_eIF3G_like"/>
    <property type="match status" value="1"/>
</dbReference>
<dbReference type="FunFam" id="3.30.70.330:FF:000828">
    <property type="entry name" value="Eukaryotic translation initiation factor 3 subunit G"/>
    <property type="match status" value="1"/>
</dbReference>
<dbReference type="Gene3D" id="3.30.70.330">
    <property type="match status" value="1"/>
</dbReference>
<dbReference type="HAMAP" id="MF_03006">
    <property type="entry name" value="eIF3g"/>
    <property type="match status" value="1"/>
</dbReference>
<dbReference type="InterPro" id="IPR017334">
    <property type="entry name" value="eIF3_g"/>
</dbReference>
<dbReference type="InterPro" id="IPR024675">
    <property type="entry name" value="eIF3g_N"/>
</dbReference>
<dbReference type="InterPro" id="IPR034240">
    <property type="entry name" value="eIF3G_RRM"/>
</dbReference>
<dbReference type="InterPro" id="IPR012677">
    <property type="entry name" value="Nucleotide-bd_a/b_plait_sf"/>
</dbReference>
<dbReference type="InterPro" id="IPR035979">
    <property type="entry name" value="RBD_domain_sf"/>
</dbReference>
<dbReference type="InterPro" id="IPR000504">
    <property type="entry name" value="RRM_dom"/>
</dbReference>
<dbReference type="PANTHER" id="PTHR10352">
    <property type="entry name" value="EUKARYOTIC TRANSLATION INITIATION FACTOR 3 SUBUNIT G"/>
    <property type="match status" value="1"/>
</dbReference>
<dbReference type="Pfam" id="PF12353">
    <property type="entry name" value="eIF3g"/>
    <property type="match status" value="1"/>
</dbReference>
<dbReference type="Pfam" id="PF00076">
    <property type="entry name" value="RRM_1"/>
    <property type="match status" value="1"/>
</dbReference>
<dbReference type="PIRSF" id="PIRSF037949">
    <property type="entry name" value="Transl_init_eIF-3_RNA-bind"/>
    <property type="match status" value="1"/>
</dbReference>
<dbReference type="SMART" id="SM00360">
    <property type="entry name" value="RRM"/>
    <property type="match status" value="1"/>
</dbReference>
<dbReference type="SUPFAM" id="SSF54928">
    <property type="entry name" value="RNA-binding domain, RBD"/>
    <property type="match status" value="1"/>
</dbReference>
<dbReference type="PROSITE" id="PS50102">
    <property type="entry name" value="RRM"/>
    <property type="match status" value="1"/>
</dbReference>
<comment type="function">
    <text evidence="1">RNA-binding component of the eukaryotic translation initiation factor 3 (eIF-3) complex, which is involved in protein synthesis of a specialized repertoire of mRNAs and, together with other initiation factors, stimulates binding of mRNA and methionyl-tRNAi to the 40S ribosome. The eIF-3 complex specifically targets and initiates translation of a subset of mRNAs involved in cell proliferation. This subunit can bind 18S rRNA.</text>
</comment>
<comment type="subunit">
    <text evidence="1">Component of the eukaryotic translation initiation factor 3 (eIF-3) complex. The eIF-3 complex interacts with pix.</text>
</comment>
<comment type="subcellular location">
    <subcellularLocation>
        <location evidence="1">Cytoplasm</location>
    </subcellularLocation>
</comment>
<comment type="similarity">
    <text evidence="1">Belongs to the eIF-3 subunit G family.</text>
</comment>
<organism>
    <name type="scientific">Drosophila melanogaster</name>
    <name type="common">Fruit fly</name>
    <dbReference type="NCBI Taxonomy" id="7227"/>
    <lineage>
        <taxon>Eukaryota</taxon>
        <taxon>Metazoa</taxon>
        <taxon>Ecdysozoa</taxon>
        <taxon>Arthropoda</taxon>
        <taxon>Hexapoda</taxon>
        <taxon>Insecta</taxon>
        <taxon>Pterygota</taxon>
        <taxon>Neoptera</taxon>
        <taxon>Endopterygota</taxon>
        <taxon>Diptera</taxon>
        <taxon>Brachycera</taxon>
        <taxon>Muscomorpha</taxon>
        <taxon>Ephydroidea</taxon>
        <taxon>Drosophilidae</taxon>
        <taxon>Drosophila</taxon>
        <taxon>Sophophora</taxon>
    </lineage>
</organism>
<name>EI3G1_DROME</name>
<feature type="chain" id="PRO_0000365413" description="Eukaryotic translation initiation factor 3 subunit G-1">
    <location>
        <begin position="1"/>
        <end position="269"/>
    </location>
</feature>
<feature type="domain" description="RRM" evidence="1">
    <location>
        <begin position="188"/>
        <end position="266"/>
    </location>
</feature>
<feature type="modified residue" description="Phosphoserine" evidence="1 2 3">
    <location>
        <position position="198"/>
    </location>
</feature>
<protein>
    <recommendedName>
        <fullName evidence="4">Eukaryotic translation initiation factor 3 subunit G-1</fullName>
    </recommendedName>
    <alternativeName>
        <fullName evidence="1">Eukaryotic translation initiation factor 3 RNA-binding subunit 1</fullName>
        <shortName evidence="1">eIF-3 RNA-binding subunit 1</shortName>
    </alternativeName>
    <alternativeName>
        <fullName evidence="1">Eukaryotic translation initiation factor 3 subunit 4-1</fullName>
    </alternativeName>
</protein>
<gene>
    <name evidence="4" type="primary">eIF3g1</name>
    <name evidence="1" type="synonym">eIF3-S4</name>
    <name evidence="4" type="synonym">eIF3ga</name>
    <name evidence="4" type="ORF">CG8636</name>
</gene>
<evidence type="ECO:0000255" key="1">
    <source>
        <dbReference type="HAMAP-Rule" id="MF_03006"/>
    </source>
</evidence>
<evidence type="ECO:0000269" key="2">
    <source>
    </source>
</evidence>
<evidence type="ECO:0000269" key="3">
    <source>
    </source>
</evidence>
<evidence type="ECO:0000312" key="4">
    <source>
        <dbReference type="FlyBase" id="FBgn0029629"/>
    </source>
</evidence>